<keyword id="KW-0414">Isoprene biosynthesis</keyword>
<keyword id="KW-0456">Lyase</keyword>
<keyword id="KW-0479">Metal-binding</keyword>
<keyword id="KW-1185">Reference proteome</keyword>
<sequence>MGSESSGTAELPPLPQVGIGTDIHAFEDGRELWCAGLKWEGEGTGLAGHSDADVVAHAACNALFSAAGAGDLGQHFGTGRPEWSGASGVTLLAEAARIVRARGFRIGNVAVQVVGARPKIGKRRDEAEAVLSAAVGAPVSVSGATTDGLGFPGRGEGLMAVATALVVRGA</sequence>
<name>ISPF_STRCO</name>
<evidence type="ECO:0000255" key="1">
    <source>
        <dbReference type="HAMAP-Rule" id="MF_00107"/>
    </source>
</evidence>
<protein>
    <recommendedName>
        <fullName evidence="1">2-C-methyl-D-erythritol 2,4-cyclodiphosphate synthase</fullName>
        <shortName evidence="1">MECDP-synthase</shortName>
        <shortName evidence="1">MECPP-synthase</shortName>
        <shortName evidence="1">MECPS</shortName>
        <ecNumber evidence="1">4.6.1.12</ecNumber>
    </recommendedName>
</protein>
<comment type="function">
    <text evidence="1">Involved in the biosynthesis of isopentenyl diphosphate (IPP) and dimethylallyl diphosphate (DMAPP), two major building blocks of isoprenoid compounds. Catalyzes the conversion of 4-diphosphocytidyl-2-C-methyl-D-erythritol 2-phosphate (CDP-ME2P) to 2-C-methyl-D-erythritol 2,4-cyclodiphosphate (ME-CPP) with a corresponding release of cytidine 5-monophosphate (CMP).</text>
</comment>
<comment type="catalytic activity">
    <reaction evidence="1">
        <text>4-CDP-2-C-methyl-D-erythritol 2-phosphate = 2-C-methyl-D-erythritol 2,4-cyclic diphosphate + CMP</text>
        <dbReference type="Rhea" id="RHEA:23864"/>
        <dbReference type="ChEBI" id="CHEBI:57919"/>
        <dbReference type="ChEBI" id="CHEBI:58483"/>
        <dbReference type="ChEBI" id="CHEBI:60377"/>
        <dbReference type="EC" id="4.6.1.12"/>
    </reaction>
</comment>
<comment type="cofactor">
    <cofactor evidence="1">
        <name>a divalent metal cation</name>
        <dbReference type="ChEBI" id="CHEBI:60240"/>
    </cofactor>
    <text evidence="1">Binds 1 divalent metal cation per subunit.</text>
</comment>
<comment type="pathway">
    <text evidence="1">Isoprenoid biosynthesis; isopentenyl diphosphate biosynthesis via DXP pathway; isopentenyl diphosphate from 1-deoxy-D-xylulose 5-phosphate: step 4/6.</text>
</comment>
<comment type="subunit">
    <text evidence="1">Homotrimer.</text>
</comment>
<comment type="similarity">
    <text evidence="1">Belongs to the IspF family.</text>
</comment>
<proteinExistence type="inferred from homology"/>
<dbReference type="EC" id="4.6.1.12" evidence="1"/>
<dbReference type="EMBL" id="AL939119">
    <property type="protein sequence ID" value="CAB77328.1"/>
    <property type="molecule type" value="Genomic_DNA"/>
</dbReference>
<dbReference type="RefSeq" id="NP_628408.1">
    <property type="nucleotide sequence ID" value="NC_003888.3"/>
</dbReference>
<dbReference type="RefSeq" id="WP_011029522.1">
    <property type="nucleotide sequence ID" value="NZ_VNID01000031.1"/>
</dbReference>
<dbReference type="SMR" id="Q9L0Q7"/>
<dbReference type="FunCoup" id="Q9L0Q7">
    <property type="interactions" value="250"/>
</dbReference>
<dbReference type="STRING" id="100226.gene:17761878"/>
<dbReference type="PaxDb" id="100226-SCO4234"/>
<dbReference type="KEGG" id="sco:SCO4234"/>
<dbReference type="PATRIC" id="fig|100226.15.peg.4296"/>
<dbReference type="eggNOG" id="COG0245">
    <property type="taxonomic scope" value="Bacteria"/>
</dbReference>
<dbReference type="HOGENOM" id="CLU_084630_1_0_11"/>
<dbReference type="InParanoid" id="Q9L0Q7"/>
<dbReference type="OrthoDB" id="9804336at2"/>
<dbReference type="PhylomeDB" id="Q9L0Q7"/>
<dbReference type="UniPathway" id="UPA00056">
    <property type="reaction ID" value="UER00095"/>
</dbReference>
<dbReference type="Proteomes" id="UP000001973">
    <property type="component" value="Chromosome"/>
</dbReference>
<dbReference type="GO" id="GO:0008685">
    <property type="term" value="F:2-C-methyl-D-erythritol 2,4-cyclodiphosphate synthase activity"/>
    <property type="evidence" value="ECO:0000318"/>
    <property type="project" value="GO_Central"/>
</dbReference>
<dbReference type="GO" id="GO:0046872">
    <property type="term" value="F:metal ion binding"/>
    <property type="evidence" value="ECO:0007669"/>
    <property type="project" value="UniProtKB-KW"/>
</dbReference>
<dbReference type="GO" id="GO:0019288">
    <property type="term" value="P:isopentenyl diphosphate biosynthetic process, methylerythritol 4-phosphate pathway"/>
    <property type="evidence" value="ECO:0007669"/>
    <property type="project" value="UniProtKB-UniRule"/>
</dbReference>
<dbReference type="GO" id="GO:0016114">
    <property type="term" value="P:terpenoid biosynthetic process"/>
    <property type="evidence" value="ECO:0007669"/>
    <property type="project" value="InterPro"/>
</dbReference>
<dbReference type="CDD" id="cd00554">
    <property type="entry name" value="MECDP_synthase"/>
    <property type="match status" value="1"/>
</dbReference>
<dbReference type="FunFam" id="3.30.1330.50:FF:000003">
    <property type="entry name" value="2-C-methyl-D-erythritol 2,4-cyclodiphosphate synthase"/>
    <property type="match status" value="1"/>
</dbReference>
<dbReference type="Gene3D" id="3.30.1330.50">
    <property type="entry name" value="2-C-methyl-D-erythritol 2,4-cyclodiphosphate synthase"/>
    <property type="match status" value="1"/>
</dbReference>
<dbReference type="HAMAP" id="MF_00107">
    <property type="entry name" value="IspF"/>
    <property type="match status" value="1"/>
</dbReference>
<dbReference type="InterPro" id="IPR003526">
    <property type="entry name" value="MECDP_synthase"/>
</dbReference>
<dbReference type="InterPro" id="IPR020555">
    <property type="entry name" value="MECDP_synthase_CS"/>
</dbReference>
<dbReference type="InterPro" id="IPR036571">
    <property type="entry name" value="MECDP_synthase_sf"/>
</dbReference>
<dbReference type="NCBIfam" id="TIGR00151">
    <property type="entry name" value="ispF"/>
    <property type="match status" value="1"/>
</dbReference>
<dbReference type="PANTHER" id="PTHR43181">
    <property type="entry name" value="2-C-METHYL-D-ERYTHRITOL 2,4-CYCLODIPHOSPHATE SYNTHASE, CHLOROPLASTIC"/>
    <property type="match status" value="1"/>
</dbReference>
<dbReference type="PANTHER" id="PTHR43181:SF1">
    <property type="entry name" value="2-C-METHYL-D-ERYTHRITOL 2,4-CYCLODIPHOSPHATE SYNTHASE, CHLOROPLASTIC"/>
    <property type="match status" value="1"/>
</dbReference>
<dbReference type="Pfam" id="PF02542">
    <property type="entry name" value="YgbB"/>
    <property type="match status" value="1"/>
</dbReference>
<dbReference type="SUPFAM" id="SSF69765">
    <property type="entry name" value="IpsF-like"/>
    <property type="match status" value="1"/>
</dbReference>
<dbReference type="PROSITE" id="PS01350">
    <property type="entry name" value="ISPF"/>
    <property type="match status" value="1"/>
</dbReference>
<feature type="chain" id="PRO_0000189505" description="2-C-methyl-D-erythritol 2,4-cyclodiphosphate synthase">
    <location>
        <begin position="1"/>
        <end position="170"/>
    </location>
</feature>
<feature type="binding site" evidence="1">
    <location>
        <begin position="22"/>
        <end position="24"/>
    </location>
    <ligand>
        <name>4-CDP-2-C-methyl-D-erythritol 2-phosphate</name>
        <dbReference type="ChEBI" id="CHEBI:57919"/>
    </ligand>
</feature>
<feature type="binding site" evidence="1">
    <location>
        <position position="22"/>
    </location>
    <ligand>
        <name>a divalent metal cation</name>
        <dbReference type="ChEBI" id="CHEBI:60240"/>
    </ligand>
</feature>
<feature type="binding site" evidence="1">
    <location>
        <position position="24"/>
    </location>
    <ligand>
        <name>a divalent metal cation</name>
        <dbReference type="ChEBI" id="CHEBI:60240"/>
    </ligand>
</feature>
<feature type="binding site" evidence="1">
    <location>
        <begin position="49"/>
        <end position="50"/>
    </location>
    <ligand>
        <name>4-CDP-2-C-methyl-D-erythritol 2-phosphate</name>
        <dbReference type="ChEBI" id="CHEBI:57919"/>
    </ligand>
</feature>
<feature type="binding site" evidence="1">
    <location>
        <position position="57"/>
    </location>
    <ligand>
        <name>a divalent metal cation</name>
        <dbReference type="ChEBI" id="CHEBI:60240"/>
    </ligand>
</feature>
<feature type="binding site" evidence="1">
    <location>
        <begin position="71"/>
        <end position="73"/>
    </location>
    <ligand>
        <name>4-CDP-2-C-methyl-D-erythritol 2-phosphate</name>
        <dbReference type="ChEBI" id="CHEBI:57919"/>
    </ligand>
</feature>
<feature type="binding site" evidence="1">
    <location>
        <position position="151"/>
    </location>
    <ligand>
        <name>4-CDP-2-C-methyl-D-erythritol 2-phosphate</name>
        <dbReference type="ChEBI" id="CHEBI:57919"/>
    </ligand>
</feature>
<feature type="binding site" evidence="1">
    <location>
        <position position="154"/>
    </location>
    <ligand>
        <name>4-CDP-2-C-methyl-D-erythritol 2-phosphate</name>
        <dbReference type="ChEBI" id="CHEBI:57919"/>
    </ligand>
</feature>
<feature type="site" description="Transition state stabilizer" evidence="1">
    <location>
        <position position="49"/>
    </location>
</feature>
<feature type="site" description="Transition state stabilizer" evidence="1">
    <location>
        <position position="145"/>
    </location>
</feature>
<reference key="1">
    <citation type="journal article" date="2002" name="Nature">
        <title>Complete genome sequence of the model actinomycete Streptomyces coelicolor A3(2).</title>
        <authorList>
            <person name="Bentley S.D."/>
            <person name="Chater K.F."/>
            <person name="Cerdeno-Tarraga A.-M."/>
            <person name="Challis G.L."/>
            <person name="Thomson N.R."/>
            <person name="James K.D."/>
            <person name="Harris D.E."/>
            <person name="Quail M.A."/>
            <person name="Kieser H."/>
            <person name="Harper D."/>
            <person name="Bateman A."/>
            <person name="Brown S."/>
            <person name="Chandra G."/>
            <person name="Chen C.W."/>
            <person name="Collins M."/>
            <person name="Cronin A."/>
            <person name="Fraser A."/>
            <person name="Goble A."/>
            <person name="Hidalgo J."/>
            <person name="Hornsby T."/>
            <person name="Howarth S."/>
            <person name="Huang C.-H."/>
            <person name="Kieser T."/>
            <person name="Larke L."/>
            <person name="Murphy L.D."/>
            <person name="Oliver K."/>
            <person name="O'Neil S."/>
            <person name="Rabbinowitsch E."/>
            <person name="Rajandream M.A."/>
            <person name="Rutherford K.M."/>
            <person name="Rutter S."/>
            <person name="Seeger K."/>
            <person name="Saunders D."/>
            <person name="Sharp S."/>
            <person name="Squares R."/>
            <person name="Squares S."/>
            <person name="Taylor K."/>
            <person name="Warren T."/>
            <person name="Wietzorrek A."/>
            <person name="Woodward J.R."/>
            <person name="Barrell B.G."/>
            <person name="Parkhill J."/>
            <person name="Hopwood D.A."/>
        </authorList>
    </citation>
    <scope>NUCLEOTIDE SEQUENCE [LARGE SCALE GENOMIC DNA]</scope>
    <source>
        <strain>ATCC BAA-471 / A3(2) / M145</strain>
    </source>
</reference>
<organism>
    <name type="scientific">Streptomyces coelicolor (strain ATCC BAA-471 / A3(2) / M145)</name>
    <dbReference type="NCBI Taxonomy" id="100226"/>
    <lineage>
        <taxon>Bacteria</taxon>
        <taxon>Bacillati</taxon>
        <taxon>Actinomycetota</taxon>
        <taxon>Actinomycetes</taxon>
        <taxon>Kitasatosporales</taxon>
        <taxon>Streptomycetaceae</taxon>
        <taxon>Streptomyces</taxon>
        <taxon>Streptomyces albidoflavus group</taxon>
    </lineage>
</organism>
<gene>
    <name evidence="1" type="primary">ispF</name>
    <name type="ordered locus">SCO4234</name>
    <name type="ORF">SCD8A.07</name>
</gene>
<accession>Q9L0Q7</accession>